<name>AROC_HAEIE</name>
<organism>
    <name type="scientific">Haemophilus influenzae (strain PittEE)</name>
    <dbReference type="NCBI Taxonomy" id="374930"/>
    <lineage>
        <taxon>Bacteria</taxon>
        <taxon>Pseudomonadati</taxon>
        <taxon>Pseudomonadota</taxon>
        <taxon>Gammaproteobacteria</taxon>
        <taxon>Pasteurellales</taxon>
        <taxon>Pasteurellaceae</taxon>
        <taxon>Haemophilus</taxon>
    </lineage>
</organism>
<evidence type="ECO:0000255" key="1">
    <source>
        <dbReference type="HAMAP-Rule" id="MF_00300"/>
    </source>
</evidence>
<evidence type="ECO:0000256" key="2">
    <source>
        <dbReference type="SAM" id="MobiDB-lite"/>
    </source>
</evidence>
<keyword id="KW-0028">Amino-acid biosynthesis</keyword>
<keyword id="KW-0057">Aromatic amino acid biosynthesis</keyword>
<keyword id="KW-0274">FAD</keyword>
<keyword id="KW-0285">Flavoprotein</keyword>
<keyword id="KW-0288">FMN</keyword>
<keyword id="KW-0456">Lyase</keyword>
<keyword id="KW-0521">NADP</keyword>
<protein>
    <recommendedName>
        <fullName evidence="1">Chorismate synthase</fullName>
        <shortName evidence="1">CS</shortName>
        <ecNumber evidence="1">4.2.3.5</ecNumber>
    </recommendedName>
    <alternativeName>
        <fullName evidence="1">5-enolpyruvylshikimate-3-phosphate phospholyase</fullName>
    </alternativeName>
</protein>
<reference key="1">
    <citation type="journal article" date="2007" name="Genome Biol.">
        <title>Characterization and modeling of the Haemophilus influenzae core and supragenomes based on the complete genomic sequences of Rd and 12 clinical nontypeable strains.</title>
        <authorList>
            <person name="Hogg J.S."/>
            <person name="Hu F.Z."/>
            <person name="Janto B."/>
            <person name="Boissy R."/>
            <person name="Hayes J."/>
            <person name="Keefe R."/>
            <person name="Post J.C."/>
            <person name="Ehrlich G.D."/>
        </authorList>
    </citation>
    <scope>NUCLEOTIDE SEQUENCE [LARGE SCALE GENOMIC DNA]</scope>
    <source>
        <strain>PittEE</strain>
    </source>
</reference>
<proteinExistence type="inferred from homology"/>
<gene>
    <name evidence="1" type="primary">aroC</name>
    <name type="ordered locus">CGSHiEE_02270</name>
</gene>
<accession>A5UAV8</accession>
<sequence>MAGNTIGQLFRVTTFGESHGIALGCIVDGVPPNLELSEKDIQPDLDRRKPGTSRYTTPRREDDEVQILSGVFEGKTTGTSIGMIIKNGDQRSQDYGDIKDRFRPGHADFTYQQKYGIRDYRGGGRSSARETAMRVAAGAIAKKYLREHFGIEVRGFLSQIGNIKIAPQKVGQIDWEKVNSNPFFCPDESAVEKFDELIRELKKEGDSIGAKLTVIAENVPVGLGEPVFDRLDADLAHALMGINAVKGVEIGDGFAVVKQRGSEHRDEMTPNGFESNHAGGILGGISSGQPIIATIALKPTSSITIPGRSINLNGKPVEVVTKGRHDPCVGIRAVPIAEAMVAIVLLDHLLRFKAQCK</sequence>
<comment type="function">
    <text evidence="1">Catalyzes the anti-1,4-elimination of the C-3 phosphate and the C-6 proR hydrogen from 5-enolpyruvylshikimate-3-phosphate (EPSP) to yield chorismate, which is the branch point compound that serves as the starting substrate for the three terminal pathways of aromatic amino acid biosynthesis. This reaction introduces a second double bond into the aromatic ring system.</text>
</comment>
<comment type="catalytic activity">
    <reaction evidence="1">
        <text>5-O-(1-carboxyvinyl)-3-phosphoshikimate = chorismate + phosphate</text>
        <dbReference type="Rhea" id="RHEA:21020"/>
        <dbReference type="ChEBI" id="CHEBI:29748"/>
        <dbReference type="ChEBI" id="CHEBI:43474"/>
        <dbReference type="ChEBI" id="CHEBI:57701"/>
        <dbReference type="EC" id="4.2.3.5"/>
    </reaction>
</comment>
<comment type="cofactor">
    <cofactor evidence="1">
        <name>FMNH2</name>
        <dbReference type="ChEBI" id="CHEBI:57618"/>
    </cofactor>
    <text evidence="1">Reduced FMN (FMNH(2)).</text>
</comment>
<comment type="pathway">
    <text evidence="1">Metabolic intermediate biosynthesis; chorismate biosynthesis; chorismate from D-erythrose 4-phosphate and phosphoenolpyruvate: step 7/7.</text>
</comment>
<comment type="subunit">
    <text evidence="1">Homotetramer.</text>
</comment>
<comment type="similarity">
    <text evidence="1">Belongs to the chorismate synthase family.</text>
</comment>
<feature type="chain" id="PRO_1000022494" description="Chorismate synthase">
    <location>
        <begin position="1"/>
        <end position="357"/>
    </location>
</feature>
<feature type="region of interest" description="Disordered" evidence="2">
    <location>
        <begin position="38"/>
        <end position="60"/>
    </location>
</feature>
<feature type="compositionally biased region" description="Basic and acidic residues" evidence="2">
    <location>
        <begin position="38"/>
        <end position="49"/>
    </location>
</feature>
<feature type="binding site" evidence="1">
    <location>
        <position position="48"/>
    </location>
    <ligand>
        <name>NADP(+)</name>
        <dbReference type="ChEBI" id="CHEBI:58349"/>
    </ligand>
</feature>
<feature type="binding site" evidence="1">
    <location>
        <position position="54"/>
    </location>
    <ligand>
        <name>NADP(+)</name>
        <dbReference type="ChEBI" id="CHEBI:58349"/>
    </ligand>
</feature>
<feature type="binding site" evidence="1">
    <location>
        <begin position="125"/>
        <end position="127"/>
    </location>
    <ligand>
        <name>FMN</name>
        <dbReference type="ChEBI" id="CHEBI:58210"/>
    </ligand>
</feature>
<feature type="binding site" evidence="1">
    <location>
        <begin position="243"/>
        <end position="244"/>
    </location>
    <ligand>
        <name>FMN</name>
        <dbReference type="ChEBI" id="CHEBI:58210"/>
    </ligand>
</feature>
<feature type="binding site" evidence="1">
    <location>
        <position position="283"/>
    </location>
    <ligand>
        <name>FMN</name>
        <dbReference type="ChEBI" id="CHEBI:58210"/>
    </ligand>
</feature>
<feature type="binding site" evidence="1">
    <location>
        <begin position="298"/>
        <end position="302"/>
    </location>
    <ligand>
        <name>FMN</name>
        <dbReference type="ChEBI" id="CHEBI:58210"/>
    </ligand>
</feature>
<feature type="binding site" evidence="1">
    <location>
        <position position="324"/>
    </location>
    <ligand>
        <name>FMN</name>
        <dbReference type="ChEBI" id="CHEBI:58210"/>
    </ligand>
</feature>
<dbReference type="EC" id="4.2.3.5" evidence="1"/>
<dbReference type="EMBL" id="CP000671">
    <property type="protein sequence ID" value="ABQ97909.1"/>
    <property type="molecule type" value="Genomic_DNA"/>
</dbReference>
<dbReference type="SMR" id="A5UAV8"/>
<dbReference type="KEGG" id="hip:CGSHiEE_02270"/>
<dbReference type="HOGENOM" id="CLU_034547_0_2_6"/>
<dbReference type="UniPathway" id="UPA00053">
    <property type="reaction ID" value="UER00090"/>
</dbReference>
<dbReference type="GO" id="GO:0005829">
    <property type="term" value="C:cytosol"/>
    <property type="evidence" value="ECO:0007669"/>
    <property type="project" value="TreeGrafter"/>
</dbReference>
<dbReference type="GO" id="GO:0004107">
    <property type="term" value="F:chorismate synthase activity"/>
    <property type="evidence" value="ECO:0007669"/>
    <property type="project" value="UniProtKB-UniRule"/>
</dbReference>
<dbReference type="GO" id="GO:0010181">
    <property type="term" value="F:FMN binding"/>
    <property type="evidence" value="ECO:0007669"/>
    <property type="project" value="TreeGrafter"/>
</dbReference>
<dbReference type="GO" id="GO:0008652">
    <property type="term" value="P:amino acid biosynthetic process"/>
    <property type="evidence" value="ECO:0007669"/>
    <property type="project" value="UniProtKB-KW"/>
</dbReference>
<dbReference type="GO" id="GO:0009073">
    <property type="term" value="P:aromatic amino acid family biosynthetic process"/>
    <property type="evidence" value="ECO:0007669"/>
    <property type="project" value="UniProtKB-KW"/>
</dbReference>
<dbReference type="GO" id="GO:0009423">
    <property type="term" value="P:chorismate biosynthetic process"/>
    <property type="evidence" value="ECO:0007669"/>
    <property type="project" value="UniProtKB-UniRule"/>
</dbReference>
<dbReference type="CDD" id="cd07304">
    <property type="entry name" value="Chorismate_synthase"/>
    <property type="match status" value="1"/>
</dbReference>
<dbReference type="FunFam" id="3.60.150.10:FF:000001">
    <property type="entry name" value="Chorismate synthase"/>
    <property type="match status" value="1"/>
</dbReference>
<dbReference type="Gene3D" id="3.60.150.10">
    <property type="entry name" value="Chorismate synthase AroC"/>
    <property type="match status" value="1"/>
</dbReference>
<dbReference type="HAMAP" id="MF_00300">
    <property type="entry name" value="Chorismate_synth"/>
    <property type="match status" value="1"/>
</dbReference>
<dbReference type="InterPro" id="IPR000453">
    <property type="entry name" value="Chorismate_synth"/>
</dbReference>
<dbReference type="InterPro" id="IPR035904">
    <property type="entry name" value="Chorismate_synth_AroC_sf"/>
</dbReference>
<dbReference type="InterPro" id="IPR020541">
    <property type="entry name" value="Chorismate_synthase_CS"/>
</dbReference>
<dbReference type="NCBIfam" id="TIGR00033">
    <property type="entry name" value="aroC"/>
    <property type="match status" value="1"/>
</dbReference>
<dbReference type="NCBIfam" id="NF003793">
    <property type="entry name" value="PRK05382.1"/>
    <property type="match status" value="1"/>
</dbReference>
<dbReference type="PANTHER" id="PTHR21085">
    <property type="entry name" value="CHORISMATE SYNTHASE"/>
    <property type="match status" value="1"/>
</dbReference>
<dbReference type="PANTHER" id="PTHR21085:SF0">
    <property type="entry name" value="CHORISMATE SYNTHASE"/>
    <property type="match status" value="1"/>
</dbReference>
<dbReference type="Pfam" id="PF01264">
    <property type="entry name" value="Chorismate_synt"/>
    <property type="match status" value="1"/>
</dbReference>
<dbReference type="PIRSF" id="PIRSF001456">
    <property type="entry name" value="Chorismate_synth"/>
    <property type="match status" value="1"/>
</dbReference>
<dbReference type="SUPFAM" id="SSF103263">
    <property type="entry name" value="Chorismate synthase, AroC"/>
    <property type="match status" value="1"/>
</dbReference>
<dbReference type="PROSITE" id="PS00787">
    <property type="entry name" value="CHORISMATE_SYNTHASE_1"/>
    <property type="match status" value="1"/>
</dbReference>
<dbReference type="PROSITE" id="PS00788">
    <property type="entry name" value="CHORISMATE_SYNTHASE_2"/>
    <property type="match status" value="1"/>
</dbReference>
<dbReference type="PROSITE" id="PS00789">
    <property type="entry name" value="CHORISMATE_SYNTHASE_3"/>
    <property type="match status" value="1"/>
</dbReference>